<organism>
    <name type="scientific">Saccharolobus islandicus (strain M.16.27)</name>
    <name type="common">Sulfolobus islandicus</name>
    <dbReference type="NCBI Taxonomy" id="427318"/>
    <lineage>
        <taxon>Archaea</taxon>
        <taxon>Thermoproteota</taxon>
        <taxon>Thermoprotei</taxon>
        <taxon>Sulfolobales</taxon>
        <taxon>Sulfolobaceae</taxon>
        <taxon>Saccharolobus</taxon>
    </lineage>
</organism>
<gene>
    <name evidence="1" type="primary">srp54</name>
    <name type="ordered locus">M1627_1302</name>
</gene>
<sequence>MLENIRDAVRKFLTGSTPYEKAVDEFVKELQKSLISSDVNVKLVFSLTAKIKERLNKEKPPSVLERKEWFISIVYDELSKLFGGDKEPNVNPTKLPFIIMLVGVQGSGKTTTSGKLAYFYKRRGYKVGLVAADVYRPAAYDQLLQLGNQIGVPVYGEPNNQNAIEIAKKGVDTFVKNKMDIIIVDTAGRHGYGEETKLLEEMKEIYEALKPDDVILVIDASIGQKAYDLASRFHQASPIGSIIITKMDGTAKGGGALSAVAATGATIKFIGTGEKIDELEIFNAKRYVSRILGMGDIESILEKVKGLEEYEKIQKKMEDVMEGKGKLTLRDVYAQIMALRKMGPLSKVLQHIPGLGVMLPTPSEDQLKLGEEKIRRWLAALNSMTYKELENPSIIDKSRMRRIAEGSGLEVEDVRELLEWYNNMNKLLKMVKRRRGSIDKLFGGKIG</sequence>
<protein>
    <recommendedName>
        <fullName evidence="1">Signal recognition particle 54 kDa protein</fullName>
        <shortName evidence="1">SRP54</shortName>
        <ecNumber evidence="1">3.6.5.4</ecNumber>
    </recommendedName>
</protein>
<reference key="1">
    <citation type="journal article" date="2009" name="Proc. Natl. Acad. Sci. U.S.A.">
        <title>Biogeography of the Sulfolobus islandicus pan-genome.</title>
        <authorList>
            <person name="Reno M.L."/>
            <person name="Held N.L."/>
            <person name="Fields C.J."/>
            <person name="Burke P.V."/>
            <person name="Whitaker R.J."/>
        </authorList>
    </citation>
    <scope>NUCLEOTIDE SEQUENCE [LARGE SCALE GENOMIC DNA]</scope>
    <source>
        <strain>M.16.27</strain>
    </source>
</reference>
<evidence type="ECO:0000255" key="1">
    <source>
        <dbReference type="HAMAP-Rule" id="MF_00306"/>
    </source>
</evidence>
<feature type="chain" id="PRO_1000205011" description="Signal recognition particle 54 kDa protein">
    <location>
        <begin position="1"/>
        <end position="447"/>
    </location>
</feature>
<feature type="binding site" evidence="1">
    <location>
        <begin position="103"/>
        <end position="110"/>
    </location>
    <ligand>
        <name>GTP</name>
        <dbReference type="ChEBI" id="CHEBI:37565"/>
    </ligand>
</feature>
<feature type="binding site" evidence="1">
    <location>
        <begin position="185"/>
        <end position="189"/>
    </location>
    <ligand>
        <name>GTP</name>
        <dbReference type="ChEBI" id="CHEBI:37565"/>
    </ligand>
</feature>
<feature type="binding site" evidence="1">
    <location>
        <begin position="245"/>
        <end position="248"/>
    </location>
    <ligand>
        <name>GTP</name>
        <dbReference type="ChEBI" id="CHEBI:37565"/>
    </ligand>
</feature>
<keyword id="KW-0963">Cytoplasm</keyword>
<keyword id="KW-0342">GTP-binding</keyword>
<keyword id="KW-0378">Hydrolase</keyword>
<keyword id="KW-0547">Nucleotide-binding</keyword>
<keyword id="KW-0687">Ribonucleoprotein</keyword>
<keyword id="KW-0694">RNA-binding</keyword>
<keyword id="KW-0733">Signal recognition particle</keyword>
<proteinExistence type="inferred from homology"/>
<accession>C3N5B0</accession>
<name>SRP54_SACI3</name>
<dbReference type="EC" id="3.6.5.4" evidence="1"/>
<dbReference type="EMBL" id="CP001401">
    <property type="protein sequence ID" value="ACP55185.1"/>
    <property type="molecule type" value="Genomic_DNA"/>
</dbReference>
<dbReference type="RefSeq" id="WP_012711260.1">
    <property type="nucleotide sequence ID" value="NC_012632.1"/>
</dbReference>
<dbReference type="SMR" id="C3N5B0"/>
<dbReference type="KEGG" id="sim:M1627_1302"/>
<dbReference type="HOGENOM" id="CLU_009301_6_0_2"/>
<dbReference type="Proteomes" id="UP000002307">
    <property type="component" value="Chromosome"/>
</dbReference>
<dbReference type="GO" id="GO:0048500">
    <property type="term" value="C:signal recognition particle"/>
    <property type="evidence" value="ECO:0007669"/>
    <property type="project" value="UniProtKB-UniRule"/>
</dbReference>
<dbReference type="GO" id="GO:0008312">
    <property type="term" value="F:7S RNA binding"/>
    <property type="evidence" value="ECO:0007669"/>
    <property type="project" value="UniProtKB-UniRule"/>
</dbReference>
<dbReference type="GO" id="GO:0016887">
    <property type="term" value="F:ATP hydrolysis activity"/>
    <property type="evidence" value="ECO:0007669"/>
    <property type="project" value="InterPro"/>
</dbReference>
<dbReference type="GO" id="GO:0005525">
    <property type="term" value="F:GTP binding"/>
    <property type="evidence" value="ECO:0007669"/>
    <property type="project" value="UniProtKB-UniRule"/>
</dbReference>
<dbReference type="GO" id="GO:0003924">
    <property type="term" value="F:GTPase activity"/>
    <property type="evidence" value="ECO:0007669"/>
    <property type="project" value="UniProtKB-UniRule"/>
</dbReference>
<dbReference type="GO" id="GO:0006614">
    <property type="term" value="P:SRP-dependent cotranslational protein targeting to membrane"/>
    <property type="evidence" value="ECO:0007669"/>
    <property type="project" value="InterPro"/>
</dbReference>
<dbReference type="CDD" id="cd17875">
    <property type="entry name" value="SRP54_G"/>
    <property type="match status" value="1"/>
</dbReference>
<dbReference type="FunFam" id="3.40.50.300:FF:000022">
    <property type="entry name" value="Signal recognition particle 54 kDa subunit"/>
    <property type="match status" value="1"/>
</dbReference>
<dbReference type="Gene3D" id="3.40.50.300">
    <property type="entry name" value="P-loop containing nucleotide triphosphate hydrolases"/>
    <property type="match status" value="1"/>
</dbReference>
<dbReference type="Gene3D" id="1.20.120.140">
    <property type="entry name" value="Signal recognition particle SRP54, nucleotide-binding domain"/>
    <property type="match status" value="1"/>
</dbReference>
<dbReference type="Gene3D" id="1.10.260.30">
    <property type="entry name" value="Signal recognition particle, SRP54 subunit, M-domain"/>
    <property type="match status" value="1"/>
</dbReference>
<dbReference type="HAMAP" id="MF_00306">
    <property type="entry name" value="SRP54"/>
    <property type="match status" value="1"/>
</dbReference>
<dbReference type="InterPro" id="IPR003593">
    <property type="entry name" value="AAA+_ATPase"/>
</dbReference>
<dbReference type="InterPro" id="IPR027417">
    <property type="entry name" value="P-loop_NTPase"/>
</dbReference>
<dbReference type="InterPro" id="IPR036891">
    <property type="entry name" value="Signal_recog_part_SRP54_M_sf"/>
</dbReference>
<dbReference type="InterPro" id="IPR013822">
    <property type="entry name" value="Signal_recog_particl_SRP54_hlx"/>
</dbReference>
<dbReference type="InterPro" id="IPR004125">
    <property type="entry name" value="Signal_recog_particle_SRP54_M"/>
</dbReference>
<dbReference type="InterPro" id="IPR036225">
    <property type="entry name" value="SRP/SRP_N"/>
</dbReference>
<dbReference type="InterPro" id="IPR022941">
    <property type="entry name" value="SRP54"/>
</dbReference>
<dbReference type="InterPro" id="IPR000897">
    <property type="entry name" value="SRP54_GTPase_dom"/>
</dbReference>
<dbReference type="InterPro" id="IPR042101">
    <property type="entry name" value="SRP54_N_sf"/>
</dbReference>
<dbReference type="PANTHER" id="PTHR11564">
    <property type="entry name" value="SIGNAL RECOGNITION PARTICLE 54K PROTEIN SRP54"/>
    <property type="match status" value="1"/>
</dbReference>
<dbReference type="PANTHER" id="PTHR11564:SF5">
    <property type="entry name" value="SIGNAL RECOGNITION PARTICLE SUBUNIT SRP54"/>
    <property type="match status" value="1"/>
</dbReference>
<dbReference type="Pfam" id="PF00448">
    <property type="entry name" value="SRP54"/>
    <property type="match status" value="1"/>
</dbReference>
<dbReference type="Pfam" id="PF02881">
    <property type="entry name" value="SRP54_N"/>
    <property type="match status" value="1"/>
</dbReference>
<dbReference type="Pfam" id="PF02978">
    <property type="entry name" value="SRP_SPB"/>
    <property type="match status" value="1"/>
</dbReference>
<dbReference type="SMART" id="SM00382">
    <property type="entry name" value="AAA"/>
    <property type="match status" value="1"/>
</dbReference>
<dbReference type="SMART" id="SM00962">
    <property type="entry name" value="SRP54"/>
    <property type="match status" value="1"/>
</dbReference>
<dbReference type="SMART" id="SM00963">
    <property type="entry name" value="SRP54_N"/>
    <property type="match status" value="1"/>
</dbReference>
<dbReference type="SUPFAM" id="SSF47364">
    <property type="entry name" value="Domain of the SRP/SRP receptor G-proteins"/>
    <property type="match status" value="1"/>
</dbReference>
<dbReference type="SUPFAM" id="SSF52540">
    <property type="entry name" value="P-loop containing nucleoside triphosphate hydrolases"/>
    <property type="match status" value="1"/>
</dbReference>
<dbReference type="SUPFAM" id="SSF47446">
    <property type="entry name" value="Signal peptide-binding domain"/>
    <property type="match status" value="1"/>
</dbReference>
<comment type="function">
    <text evidence="1">Involved in targeting and insertion of nascent membrane proteins into the cytoplasmic membrane. Binds to the hydrophobic signal sequence of the ribosome-nascent chain (RNC) as it emerges from the ribosomes. The SRP-RNC complex is then targeted to the cytoplasmic membrane where it interacts with the SRP receptor FtsY.</text>
</comment>
<comment type="catalytic activity">
    <reaction evidence="1">
        <text>GTP + H2O = GDP + phosphate + H(+)</text>
        <dbReference type="Rhea" id="RHEA:19669"/>
        <dbReference type="ChEBI" id="CHEBI:15377"/>
        <dbReference type="ChEBI" id="CHEBI:15378"/>
        <dbReference type="ChEBI" id="CHEBI:37565"/>
        <dbReference type="ChEBI" id="CHEBI:43474"/>
        <dbReference type="ChEBI" id="CHEBI:58189"/>
        <dbReference type="EC" id="3.6.5.4"/>
    </reaction>
</comment>
<comment type="subunit">
    <text evidence="1">Part of the signal recognition particle protein translocation system, which is composed of SRP and FtsY. Archaeal SRP consists of a 7S RNA molecule of 300 nucleotides and two protein subunits: SRP54 and SRP19.</text>
</comment>
<comment type="subcellular location">
    <subcellularLocation>
        <location evidence="1">Cytoplasm</location>
    </subcellularLocation>
    <text evidence="1">The SRP-RNC complex is targeted to the cytoplasmic membrane.</text>
</comment>
<comment type="domain">
    <text evidence="1">Composed of three domains: the N-terminal N domain, which is responsible for interactions with the ribosome, the central G domain, which binds GTP, and the C-terminal M domain, which binds the RNA and the signal sequence of the RNC.</text>
</comment>
<comment type="similarity">
    <text evidence="1">Belongs to the GTP-binding SRP family. SRP54 subfamily.</text>
</comment>